<evidence type="ECO:0000255" key="1">
    <source>
        <dbReference type="HAMAP-Rule" id="MF_00921"/>
    </source>
</evidence>
<organism>
    <name type="scientific">Cutibacterium acnes (strain DSM 16379 / KPA171202)</name>
    <name type="common">Propionibacterium acnes</name>
    <dbReference type="NCBI Taxonomy" id="267747"/>
    <lineage>
        <taxon>Bacteria</taxon>
        <taxon>Bacillati</taxon>
        <taxon>Actinomycetota</taxon>
        <taxon>Actinomycetes</taxon>
        <taxon>Propionibacteriales</taxon>
        <taxon>Propionibacteriaceae</taxon>
        <taxon>Cutibacterium</taxon>
    </lineage>
</organism>
<reference key="1">
    <citation type="journal article" date="2004" name="Science">
        <title>The complete genome sequence of Propionibacterium acnes, a commensal of human skin.</title>
        <authorList>
            <person name="Brueggemann H."/>
            <person name="Henne A."/>
            <person name="Hoster F."/>
            <person name="Liesegang H."/>
            <person name="Wiezer A."/>
            <person name="Strittmatter A."/>
            <person name="Hujer S."/>
            <person name="Duerre P."/>
            <person name="Gottschalk G."/>
        </authorList>
    </citation>
    <scope>NUCLEOTIDE SEQUENCE [LARGE SCALE GENOMIC DNA]</scope>
    <source>
        <strain>DSM 16379 / KPA171202</strain>
    </source>
</reference>
<protein>
    <recommendedName>
        <fullName evidence="1">Putative pyruvate, phosphate dikinase regulatory protein</fullName>
        <shortName evidence="1">PPDK regulatory protein</shortName>
        <ecNumber evidence="1">2.7.11.32</ecNumber>
        <ecNumber evidence="1">2.7.4.27</ecNumber>
    </recommendedName>
</protein>
<proteinExistence type="inferred from homology"/>
<keyword id="KW-0418">Kinase</keyword>
<keyword id="KW-0547">Nucleotide-binding</keyword>
<keyword id="KW-0723">Serine/threonine-protein kinase</keyword>
<keyword id="KW-0808">Transferase</keyword>
<comment type="function">
    <text evidence="1">Bifunctional serine/threonine kinase and phosphorylase involved in the regulation of the pyruvate, phosphate dikinase (PPDK) by catalyzing its phosphorylation/dephosphorylation.</text>
</comment>
<comment type="catalytic activity">
    <reaction evidence="1">
        <text>N(tele)-phospho-L-histidyl/L-threonyl-[pyruvate, phosphate dikinase] + ADP = N(tele)-phospho-L-histidyl/O-phospho-L-threonyl-[pyruvate, phosphate dikinase] + AMP + H(+)</text>
        <dbReference type="Rhea" id="RHEA:43692"/>
        <dbReference type="Rhea" id="RHEA-COMP:10650"/>
        <dbReference type="Rhea" id="RHEA-COMP:10651"/>
        <dbReference type="ChEBI" id="CHEBI:15378"/>
        <dbReference type="ChEBI" id="CHEBI:30013"/>
        <dbReference type="ChEBI" id="CHEBI:61977"/>
        <dbReference type="ChEBI" id="CHEBI:83586"/>
        <dbReference type="ChEBI" id="CHEBI:456215"/>
        <dbReference type="ChEBI" id="CHEBI:456216"/>
        <dbReference type="EC" id="2.7.11.32"/>
    </reaction>
</comment>
<comment type="catalytic activity">
    <reaction evidence="1">
        <text>N(tele)-phospho-L-histidyl/O-phospho-L-threonyl-[pyruvate, phosphate dikinase] + phosphate + H(+) = N(tele)-phospho-L-histidyl/L-threonyl-[pyruvate, phosphate dikinase] + diphosphate</text>
        <dbReference type="Rhea" id="RHEA:43696"/>
        <dbReference type="Rhea" id="RHEA-COMP:10650"/>
        <dbReference type="Rhea" id="RHEA-COMP:10651"/>
        <dbReference type="ChEBI" id="CHEBI:15378"/>
        <dbReference type="ChEBI" id="CHEBI:30013"/>
        <dbReference type="ChEBI" id="CHEBI:33019"/>
        <dbReference type="ChEBI" id="CHEBI:43474"/>
        <dbReference type="ChEBI" id="CHEBI:61977"/>
        <dbReference type="ChEBI" id="CHEBI:83586"/>
        <dbReference type="EC" id="2.7.4.27"/>
    </reaction>
</comment>
<comment type="similarity">
    <text evidence="1">Belongs to the pyruvate, phosphate/water dikinase regulatory protein family. PDRP subfamily.</text>
</comment>
<dbReference type="EC" id="2.7.11.32" evidence="1"/>
<dbReference type="EC" id="2.7.4.27" evidence="1"/>
<dbReference type="EMBL" id="AE017283">
    <property type="protein sequence ID" value="AAT83762.1"/>
    <property type="molecule type" value="Genomic_DNA"/>
</dbReference>
<dbReference type="RefSeq" id="WP_002530693.1">
    <property type="nucleotide sequence ID" value="NZ_CP025935.1"/>
</dbReference>
<dbReference type="SMR" id="Q6A651"/>
<dbReference type="DNASU" id="2932288"/>
<dbReference type="EnsemblBacteria" id="AAT83762">
    <property type="protein sequence ID" value="AAT83762"/>
    <property type="gene ID" value="PPA2049"/>
</dbReference>
<dbReference type="KEGG" id="pac:PPA2049"/>
<dbReference type="PATRIC" id="fig|267747.3.peg.2097"/>
<dbReference type="eggNOG" id="COG1806">
    <property type="taxonomic scope" value="Bacteria"/>
</dbReference>
<dbReference type="HOGENOM" id="CLU_046206_2_0_11"/>
<dbReference type="Proteomes" id="UP000000603">
    <property type="component" value="Chromosome"/>
</dbReference>
<dbReference type="GO" id="GO:0043531">
    <property type="term" value="F:ADP binding"/>
    <property type="evidence" value="ECO:0007669"/>
    <property type="project" value="UniProtKB-UniRule"/>
</dbReference>
<dbReference type="GO" id="GO:0005524">
    <property type="term" value="F:ATP binding"/>
    <property type="evidence" value="ECO:0007669"/>
    <property type="project" value="InterPro"/>
</dbReference>
<dbReference type="GO" id="GO:0016776">
    <property type="term" value="F:phosphotransferase activity, phosphate group as acceptor"/>
    <property type="evidence" value="ECO:0007669"/>
    <property type="project" value="UniProtKB-UniRule"/>
</dbReference>
<dbReference type="GO" id="GO:0004674">
    <property type="term" value="F:protein serine/threonine kinase activity"/>
    <property type="evidence" value="ECO:0007669"/>
    <property type="project" value="UniProtKB-UniRule"/>
</dbReference>
<dbReference type="HAMAP" id="MF_00921">
    <property type="entry name" value="PDRP"/>
    <property type="match status" value="1"/>
</dbReference>
<dbReference type="InterPro" id="IPR005177">
    <property type="entry name" value="Kinase-pyrophosphorylase"/>
</dbReference>
<dbReference type="InterPro" id="IPR026565">
    <property type="entry name" value="PPDK_reg"/>
</dbReference>
<dbReference type="NCBIfam" id="NF003742">
    <property type="entry name" value="PRK05339.1"/>
    <property type="match status" value="1"/>
</dbReference>
<dbReference type="PANTHER" id="PTHR31756">
    <property type="entry name" value="PYRUVATE, PHOSPHATE DIKINASE REGULATORY PROTEIN 1, CHLOROPLASTIC"/>
    <property type="match status" value="1"/>
</dbReference>
<dbReference type="PANTHER" id="PTHR31756:SF3">
    <property type="entry name" value="PYRUVATE, PHOSPHATE DIKINASE REGULATORY PROTEIN 1, CHLOROPLASTIC"/>
    <property type="match status" value="1"/>
</dbReference>
<dbReference type="Pfam" id="PF03618">
    <property type="entry name" value="Kinase-PPPase"/>
    <property type="match status" value="1"/>
</dbReference>
<gene>
    <name type="ordered locus">PPA2049</name>
</gene>
<accession>Q6A651</accession>
<name>PDRP_CUTAK</name>
<sequence>MAESPLEIHVIADSTGETAVRLARAARSQFEGVHWHIVRHPMIGTVPEMVSALEAVSEAHEAGQWVCVVHTLVLPDMRRMVSDACEEMGIRELDLMGPMLEAMEEASGLDADAVPRRPVGVEADYFTRISAMEFAVRNDDGAIPDRLTEADICLVGVSRSGKTPLSIYLGYLGYKTVNVPLVPGIAPPTELAAVDRWRIVGLTIDAQRLLEIRGRRVRGLGGFGNEDGYADLAAIYEELDEVGKIQRRLGCPIIDTTGLALEESATKVIDVVDQRAKTAGTRLRKPAGSYRMRP</sequence>
<feature type="chain" id="PRO_0000196687" description="Putative pyruvate, phosphate dikinase regulatory protein">
    <location>
        <begin position="1"/>
        <end position="294"/>
    </location>
</feature>
<feature type="binding site" evidence="1">
    <location>
        <begin position="156"/>
        <end position="163"/>
    </location>
    <ligand>
        <name>ADP</name>
        <dbReference type="ChEBI" id="CHEBI:456216"/>
    </ligand>
</feature>